<evidence type="ECO:0000250" key="1"/>
<evidence type="ECO:0000305" key="2"/>
<comment type="function">
    <text evidence="1">Associates with the EF-Tu.GDP complex and induces the exchange of GDP to GTP. It remains bound to the aminoacyl-tRNA.EF-Tu.GTP complex up to the GTP hydrolysis stage on the ribosome (By similarity).</text>
</comment>
<comment type="subcellular location">
    <subcellularLocation>
        <location evidence="1">Cytoplasm</location>
    </subcellularLocation>
</comment>
<comment type="similarity">
    <text evidence="2">Belongs to the EF-Ts family.</text>
</comment>
<organism>
    <name type="scientific">Mycoplasma pneumoniae (strain ATCC 29342 / M129 / Subtype 1)</name>
    <name type="common">Mycoplasmoides pneumoniae</name>
    <dbReference type="NCBI Taxonomy" id="272634"/>
    <lineage>
        <taxon>Bacteria</taxon>
        <taxon>Bacillati</taxon>
        <taxon>Mycoplasmatota</taxon>
        <taxon>Mycoplasmoidales</taxon>
        <taxon>Mycoplasmoidaceae</taxon>
        <taxon>Mycoplasmoides</taxon>
    </lineage>
</organism>
<gene>
    <name type="primary">tsf</name>
    <name type="ordered locus">MPN_631</name>
    <name type="ORF">MP211</name>
</gene>
<proteinExistence type="inferred from homology"/>
<feature type="chain" id="PRO_0000161157" description="Elongation factor Ts">
    <location>
        <begin position="1"/>
        <end position="298"/>
    </location>
</feature>
<feature type="region of interest" description="Involved in Mg(2+) ion dislocation from EF-Tu" evidence="1">
    <location>
        <begin position="79"/>
        <end position="82"/>
    </location>
</feature>
<sequence length="298" mass="33645">MATKIELIKELRKTTQASMMDCKKALEQNNDDLEKAIKWLRENGIVKSAKKLGKVAADGCIVLHSDHHKAVMVEINSQTDFVARSQELTDFAQLMISEVFKKATPTTTIEEVTQYELQGKEKVAERLALVASKTDEKIVLRRLMVFESKTNHIFSYLHANKRIGVILEVEGKFDEQDGKHLAMHIAANSPQFIDQDNVDQTWLANETSIIKSQAKLEVQDNPKKAAFLDKTIAGRVNKLLIDICLVNQKYLVDESKTVGQFLKEKNSKVIHFVRFEVGEGIVKEAVDFASEVSAQMKK</sequence>
<dbReference type="EMBL" id="U00089">
    <property type="protein sequence ID" value="AAB95859.1"/>
    <property type="molecule type" value="Genomic_DNA"/>
</dbReference>
<dbReference type="PIR" id="S73537">
    <property type="entry name" value="S73537"/>
</dbReference>
<dbReference type="RefSeq" id="NP_110320.1">
    <property type="nucleotide sequence ID" value="NC_000912.1"/>
</dbReference>
<dbReference type="RefSeq" id="WP_010874988.1">
    <property type="nucleotide sequence ID" value="NZ_OU342337.1"/>
</dbReference>
<dbReference type="SMR" id="P78009"/>
<dbReference type="IntAct" id="P78009">
    <property type="interactions" value="1"/>
</dbReference>
<dbReference type="STRING" id="272634.MPN_631"/>
<dbReference type="EnsemblBacteria" id="AAB95859">
    <property type="protein sequence ID" value="AAB95859"/>
    <property type="gene ID" value="MPN_631"/>
</dbReference>
<dbReference type="GeneID" id="66608683"/>
<dbReference type="KEGG" id="mpn:MPN_631"/>
<dbReference type="PATRIC" id="fig|272634.6.peg.695"/>
<dbReference type="HOGENOM" id="CLU_047155_0_2_14"/>
<dbReference type="OrthoDB" id="9808348at2"/>
<dbReference type="BioCyc" id="MPNE272634:G1GJ3-1013-MONOMER"/>
<dbReference type="Proteomes" id="UP000000808">
    <property type="component" value="Chromosome"/>
</dbReference>
<dbReference type="GO" id="GO:0005737">
    <property type="term" value="C:cytoplasm"/>
    <property type="evidence" value="ECO:0007669"/>
    <property type="project" value="UniProtKB-SubCell"/>
</dbReference>
<dbReference type="GO" id="GO:0003746">
    <property type="term" value="F:translation elongation factor activity"/>
    <property type="evidence" value="ECO:0007669"/>
    <property type="project" value="UniProtKB-UniRule"/>
</dbReference>
<dbReference type="CDD" id="cd14275">
    <property type="entry name" value="UBA_EF-Ts"/>
    <property type="match status" value="1"/>
</dbReference>
<dbReference type="FunFam" id="1.10.8.10:FF:000001">
    <property type="entry name" value="Elongation factor Ts"/>
    <property type="match status" value="1"/>
</dbReference>
<dbReference type="Gene3D" id="1.10.286.20">
    <property type="match status" value="1"/>
</dbReference>
<dbReference type="Gene3D" id="1.10.8.10">
    <property type="entry name" value="DNA helicase RuvA subunit, C-terminal domain"/>
    <property type="match status" value="1"/>
</dbReference>
<dbReference type="Gene3D" id="3.30.479.20">
    <property type="entry name" value="Elongation factor Ts, dimerisation domain"/>
    <property type="match status" value="2"/>
</dbReference>
<dbReference type="HAMAP" id="MF_00050">
    <property type="entry name" value="EF_Ts"/>
    <property type="match status" value="1"/>
</dbReference>
<dbReference type="InterPro" id="IPR036402">
    <property type="entry name" value="EF-Ts_dimer_sf"/>
</dbReference>
<dbReference type="InterPro" id="IPR001816">
    <property type="entry name" value="Transl_elong_EFTs/EF1B"/>
</dbReference>
<dbReference type="InterPro" id="IPR014039">
    <property type="entry name" value="Transl_elong_EFTs/EF1B_dimer"/>
</dbReference>
<dbReference type="InterPro" id="IPR018101">
    <property type="entry name" value="Transl_elong_Ts_CS"/>
</dbReference>
<dbReference type="InterPro" id="IPR009060">
    <property type="entry name" value="UBA-like_sf"/>
</dbReference>
<dbReference type="NCBIfam" id="TIGR00116">
    <property type="entry name" value="tsf"/>
    <property type="match status" value="1"/>
</dbReference>
<dbReference type="PANTHER" id="PTHR11741">
    <property type="entry name" value="ELONGATION FACTOR TS"/>
    <property type="match status" value="1"/>
</dbReference>
<dbReference type="PANTHER" id="PTHR11741:SF0">
    <property type="entry name" value="ELONGATION FACTOR TS, MITOCHONDRIAL"/>
    <property type="match status" value="1"/>
</dbReference>
<dbReference type="Pfam" id="PF25025">
    <property type="entry name" value="EF-Ts_N"/>
    <property type="match status" value="1"/>
</dbReference>
<dbReference type="Pfam" id="PF00889">
    <property type="entry name" value="EF_TS"/>
    <property type="match status" value="1"/>
</dbReference>
<dbReference type="SUPFAM" id="SSF54713">
    <property type="entry name" value="Elongation factor Ts (EF-Ts), dimerisation domain"/>
    <property type="match status" value="2"/>
</dbReference>
<dbReference type="SUPFAM" id="SSF46934">
    <property type="entry name" value="UBA-like"/>
    <property type="match status" value="1"/>
</dbReference>
<dbReference type="PROSITE" id="PS01126">
    <property type="entry name" value="EF_TS_1"/>
    <property type="match status" value="1"/>
</dbReference>
<dbReference type="PROSITE" id="PS01127">
    <property type="entry name" value="EF_TS_2"/>
    <property type="match status" value="1"/>
</dbReference>
<accession>P78009</accession>
<name>EFTS_MYCPN</name>
<keyword id="KW-0963">Cytoplasm</keyword>
<keyword id="KW-0251">Elongation factor</keyword>
<keyword id="KW-0648">Protein biosynthesis</keyword>
<keyword id="KW-1185">Reference proteome</keyword>
<protein>
    <recommendedName>
        <fullName>Elongation factor Ts</fullName>
        <shortName>EF-Ts</shortName>
    </recommendedName>
</protein>
<reference key="1">
    <citation type="journal article" date="1996" name="Nucleic Acids Res.">
        <title>Complete sequence analysis of the genome of the bacterium Mycoplasma pneumoniae.</title>
        <authorList>
            <person name="Himmelreich R."/>
            <person name="Hilbert H."/>
            <person name="Plagens H."/>
            <person name="Pirkl E."/>
            <person name="Li B.-C."/>
            <person name="Herrmann R."/>
        </authorList>
    </citation>
    <scope>NUCLEOTIDE SEQUENCE [LARGE SCALE GENOMIC DNA]</scope>
    <source>
        <strain>ATCC 29342 / M129 / Subtype 1</strain>
    </source>
</reference>